<gene>
    <name evidence="1" type="primary">thyA</name>
    <name type="ordered locus">VV0679</name>
</gene>
<keyword id="KW-0963">Cytoplasm</keyword>
<keyword id="KW-0489">Methyltransferase</keyword>
<keyword id="KW-0545">Nucleotide biosynthesis</keyword>
<keyword id="KW-0808">Transferase</keyword>
<proteinExistence type="inferred from homology"/>
<organism>
    <name type="scientific">Vibrio vulnificus (strain YJ016)</name>
    <dbReference type="NCBI Taxonomy" id="196600"/>
    <lineage>
        <taxon>Bacteria</taxon>
        <taxon>Pseudomonadati</taxon>
        <taxon>Pseudomonadota</taxon>
        <taxon>Gammaproteobacteria</taxon>
        <taxon>Vibrionales</taxon>
        <taxon>Vibrionaceae</taxon>
        <taxon>Vibrio</taxon>
    </lineage>
</organism>
<protein>
    <recommendedName>
        <fullName evidence="1">Thymidylate synthase</fullName>
        <shortName evidence="1">TS</shortName>
        <shortName evidence="1">TSase</shortName>
        <ecNumber evidence="1">2.1.1.45</ecNumber>
    </recommendedName>
</protein>
<name>TYSY_VIBVY</name>
<accession>Q7MNN6</accession>
<reference key="1">
    <citation type="journal article" date="2003" name="Genome Res.">
        <title>Comparative genome analysis of Vibrio vulnificus, a marine pathogen.</title>
        <authorList>
            <person name="Chen C.-Y."/>
            <person name="Wu K.-M."/>
            <person name="Chang Y.-C."/>
            <person name="Chang C.-H."/>
            <person name="Tsai H.-C."/>
            <person name="Liao T.-L."/>
            <person name="Liu Y.-M."/>
            <person name="Chen H.-J."/>
            <person name="Shen A.B.-T."/>
            <person name="Li J.-C."/>
            <person name="Su T.-L."/>
            <person name="Shao C.-P."/>
            <person name="Lee C.-T."/>
            <person name="Hor L.-I."/>
            <person name="Tsai S.-F."/>
        </authorList>
    </citation>
    <scope>NUCLEOTIDE SEQUENCE [LARGE SCALE GENOMIC DNA]</scope>
    <source>
        <strain>YJ016</strain>
    </source>
</reference>
<feature type="chain" id="PRO_0000141043" description="Thymidylate synthase">
    <location>
        <begin position="1"/>
        <end position="283"/>
    </location>
</feature>
<feature type="active site" description="Nucleophile" evidence="1">
    <location>
        <position position="160"/>
    </location>
</feature>
<feature type="binding site" evidence="1">
    <location>
        <position position="22"/>
    </location>
    <ligand>
        <name>dUMP</name>
        <dbReference type="ChEBI" id="CHEBI:246422"/>
    </ligand>
</feature>
<feature type="binding site" evidence="1">
    <location>
        <begin position="180"/>
        <end position="183"/>
    </location>
    <ligand>
        <name>dUMP</name>
        <dbReference type="ChEBI" id="CHEBI:246422"/>
    </ligand>
</feature>
<feature type="binding site" evidence="1">
    <location>
        <position position="183"/>
    </location>
    <ligand>
        <name>(6R)-5,10-methylene-5,6,7,8-tetrahydrofolate</name>
        <dbReference type="ChEBI" id="CHEBI:15636"/>
    </ligand>
</feature>
<feature type="binding site" evidence="1">
    <location>
        <position position="191"/>
    </location>
    <ligand>
        <name>dUMP</name>
        <dbReference type="ChEBI" id="CHEBI:246422"/>
    </ligand>
</feature>
<feature type="binding site" evidence="1">
    <location>
        <begin position="221"/>
        <end position="223"/>
    </location>
    <ligand>
        <name>dUMP</name>
        <dbReference type="ChEBI" id="CHEBI:246422"/>
    </ligand>
</feature>
<feature type="binding site" evidence="1">
    <location>
        <position position="282"/>
    </location>
    <ligand>
        <name>(6R)-5,10-methylene-5,6,7,8-tetrahydrofolate</name>
        <dbReference type="ChEBI" id="CHEBI:15636"/>
    </ligand>
</feature>
<comment type="function">
    <text evidence="1">Catalyzes the reductive methylation of 2'-deoxyuridine-5'-monophosphate (dUMP) to 2'-deoxythymidine-5'-monophosphate (dTMP) while utilizing 5,10-methylenetetrahydrofolate (mTHF) as the methyl donor and reductant in the reaction, yielding dihydrofolate (DHF) as a by-product. This enzymatic reaction provides an intracellular de novo source of dTMP, an essential precursor for DNA biosynthesis.</text>
</comment>
<comment type="catalytic activity">
    <reaction evidence="1">
        <text>dUMP + (6R)-5,10-methylene-5,6,7,8-tetrahydrofolate = 7,8-dihydrofolate + dTMP</text>
        <dbReference type="Rhea" id="RHEA:12104"/>
        <dbReference type="ChEBI" id="CHEBI:15636"/>
        <dbReference type="ChEBI" id="CHEBI:57451"/>
        <dbReference type="ChEBI" id="CHEBI:63528"/>
        <dbReference type="ChEBI" id="CHEBI:246422"/>
        <dbReference type="EC" id="2.1.1.45"/>
    </reaction>
</comment>
<comment type="pathway">
    <text evidence="1">Pyrimidine metabolism; dTTP biosynthesis.</text>
</comment>
<comment type="subunit">
    <text evidence="1">Homodimer.</text>
</comment>
<comment type="subcellular location">
    <subcellularLocation>
        <location evidence="1">Cytoplasm</location>
    </subcellularLocation>
</comment>
<comment type="similarity">
    <text evidence="1">Belongs to the thymidylate synthase family. Bacterial-type ThyA subfamily.</text>
</comment>
<sequence length="283" mass="32703">MKQYLELCRRIVDEGHWVENERTGKRCLTVINADLTYDVANNQFPLVTTRKSFWKAAVAELLGYIRGYDNAEDFRKLGTKTWDANANLNDAWLNNPYRKGDDDMGRVYGVQGRAWAKPDGGHIDQLRKIVDDLTRGVDDRGEILNFYNPGEFHMGCLRPCMYSHHFSLLGDTLYLNSTQRSCDVPLGLNFNMVQVYVFLAIMAQITGKKPGQAFHKIVNAHIYEDQLALMRDVQLKREPLQAPTFHINPEIKSLEDLETWVTLDDFWVEGYEHHDPIQYPFSV</sequence>
<evidence type="ECO:0000255" key="1">
    <source>
        <dbReference type="HAMAP-Rule" id="MF_00008"/>
    </source>
</evidence>
<dbReference type="EC" id="2.1.1.45" evidence="1"/>
<dbReference type="EMBL" id="BA000037">
    <property type="protein sequence ID" value="BAC93443.1"/>
    <property type="molecule type" value="Genomic_DNA"/>
</dbReference>
<dbReference type="RefSeq" id="WP_011149547.1">
    <property type="nucleotide sequence ID" value="NC_005139.1"/>
</dbReference>
<dbReference type="SMR" id="Q7MNN6"/>
<dbReference type="STRING" id="672.VV93_v1c06190"/>
<dbReference type="KEGG" id="vvy:VV0679"/>
<dbReference type="PATRIC" id="fig|196600.6.peg.699"/>
<dbReference type="eggNOG" id="COG0207">
    <property type="taxonomic scope" value="Bacteria"/>
</dbReference>
<dbReference type="HOGENOM" id="CLU_021669_0_1_6"/>
<dbReference type="UniPathway" id="UPA00575"/>
<dbReference type="Proteomes" id="UP000002675">
    <property type="component" value="Chromosome I"/>
</dbReference>
<dbReference type="GO" id="GO:0005829">
    <property type="term" value="C:cytosol"/>
    <property type="evidence" value="ECO:0007669"/>
    <property type="project" value="TreeGrafter"/>
</dbReference>
<dbReference type="GO" id="GO:0004799">
    <property type="term" value="F:thymidylate synthase activity"/>
    <property type="evidence" value="ECO:0007669"/>
    <property type="project" value="UniProtKB-UniRule"/>
</dbReference>
<dbReference type="GO" id="GO:0006231">
    <property type="term" value="P:dTMP biosynthetic process"/>
    <property type="evidence" value="ECO:0007669"/>
    <property type="project" value="UniProtKB-UniRule"/>
</dbReference>
<dbReference type="GO" id="GO:0006235">
    <property type="term" value="P:dTTP biosynthetic process"/>
    <property type="evidence" value="ECO:0007669"/>
    <property type="project" value="UniProtKB-UniRule"/>
</dbReference>
<dbReference type="GO" id="GO:0032259">
    <property type="term" value="P:methylation"/>
    <property type="evidence" value="ECO:0007669"/>
    <property type="project" value="UniProtKB-KW"/>
</dbReference>
<dbReference type="CDD" id="cd00351">
    <property type="entry name" value="TS_Pyrimidine_HMase"/>
    <property type="match status" value="1"/>
</dbReference>
<dbReference type="FunFam" id="3.30.572.10:FF:000003">
    <property type="entry name" value="Thymidylate synthase"/>
    <property type="match status" value="1"/>
</dbReference>
<dbReference type="Gene3D" id="3.30.572.10">
    <property type="entry name" value="Thymidylate synthase/dCMP hydroxymethylase domain"/>
    <property type="match status" value="1"/>
</dbReference>
<dbReference type="HAMAP" id="MF_00008">
    <property type="entry name" value="Thymidy_synth_bact"/>
    <property type="match status" value="1"/>
</dbReference>
<dbReference type="InterPro" id="IPR045097">
    <property type="entry name" value="Thymidate_synth/dCMP_Mease"/>
</dbReference>
<dbReference type="InterPro" id="IPR023451">
    <property type="entry name" value="Thymidate_synth/dCMP_Mease_dom"/>
</dbReference>
<dbReference type="InterPro" id="IPR036926">
    <property type="entry name" value="Thymidate_synth/dCMP_Mease_sf"/>
</dbReference>
<dbReference type="InterPro" id="IPR000398">
    <property type="entry name" value="Thymidylate_synthase"/>
</dbReference>
<dbReference type="InterPro" id="IPR020940">
    <property type="entry name" value="Thymidylate_synthase_AS"/>
</dbReference>
<dbReference type="NCBIfam" id="NF002498">
    <property type="entry name" value="PRK01827.1-4"/>
    <property type="match status" value="1"/>
</dbReference>
<dbReference type="NCBIfam" id="TIGR03284">
    <property type="entry name" value="thym_sym"/>
    <property type="match status" value="1"/>
</dbReference>
<dbReference type="PANTHER" id="PTHR11548:SF9">
    <property type="entry name" value="THYMIDYLATE SYNTHASE"/>
    <property type="match status" value="1"/>
</dbReference>
<dbReference type="PANTHER" id="PTHR11548">
    <property type="entry name" value="THYMIDYLATE SYNTHASE 1"/>
    <property type="match status" value="1"/>
</dbReference>
<dbReference type="Pfam" id="PF00303">
    <property type="entry name" value="Thymidylat_synt"/>
    <property type="match status" value="1"/>
</dbReference>
<dbReference type="PRINTS" id="PR00108">
    <property type="entry name" value="THYMDSNTHASE"/>
</dbReference>
<dbReference type="SUPFAM" id="SSF55831">
    <property type="entry name" value="Thymidylate synthase/dCMP hydroxymethylase"/>
    <property type="match status" value="1"/>
</dbReference>
<dbReference type="PROSITE" id="PS00091">
    <property type="entry name" value="THYMIDYLATE_SYNTHASE"/>
    <property type="match status" value="1"/>
</dbReference>